<keyword id="KW-0131">Cell cycle</keyword>
<keyword id="KW-0132">Cell division</keyword>
<keyword id="KW-0195">Cyclin</keyword>
<keyword id="KW-1185">Reference proteome</keyword>
<reference key="1">
    <citation type="journal article" date="1995" name="Plant Cell">
        <title>A family of cyclin D homologs from plants differentially controlled by growth regulators and containing the conserved retinoblastoma protein interaction motif.</title>
        <authorList>
            <person name="Soni R."/>
            <person name="Carmichael J.P."/>
            <person name="Shah Z.H."/>
            <person name="Murray J.A.H."/>
        </authorList>
    </citation>
    <scope>NUCLEOTIDE SEQUENCE [MRNA]</scope>
    <scope>TISSUE SPECIFICITY</scope>
    <source>
        <strain>cv. Landsberg erecta</strain>
        <tissue>Seedling</tissue>
    </source>
</reference>
<reference key="2">
    <citation type="submission" date="1998-03" db="EMBL/GenBank/DDBJ databases">
        <authorList>
            <person name="Murray J.A.H."/>
        </authorList>
    </citation>
    <scope>SEQUENCE REVISION</scope>
</reference>
<reference key="3">
    <citation type="journal article" date="2000" name="Nature">
        <title>Sequence and analysis of chromosome 1 of the plant Arabidopsis thaliana.</title>
        <authorList>
            <person name="Theologis A."/>
            <person name="Ecker J.R."/>
            <person name="Palm C.J."/>
            <person name="Federspiel N.A."/>
            <person name="Kaul S."/>
            <person name="White O."/>
            <person name="Alonso J."/>
            <person name="Altafi H."/>
            <person name="Araujo R."/>
            <person name="Bowman C.L."/>
            <person name="Brooks S.Y."/>
            <person name="Buehler E."/>
            <person name="Chan A."/>
            <person name="Chao Q."/>
            <person name="Chen H."/>
            <person name="Cheuk R.F."/>
            <person name="Chin C.W."/>
            <person name="Chung M.K."/>
            <person name="Conn L."/>
            <person name="Conway A.B."/>
            <person name="Conway A.R."/>
            <person name="Creasy T.H."/>
            <person name="Dewar K."/>
            <person name="Dunn P."/>
            <person name="Etgu P."/>
            <person name="Feldblyum T.V."/>
            <person name="Feng J.-D."/>
            <person name="Fong B."/>
            <person name="Fujii C.Y."/>
            <person name="Gill J.E."/>
            <person name="Goldsmith A.D."/>
            <person name="Haas B."/>
            <person name="Hansen N.F."/>
            <person name="Hughes B."/>
            <person name="Huizar L."/>
            <person name="Hunter J.L."/>
            <person name="Jenkins J."/>
            <person name="Johnson-Hopson C."/>
            <person name="Khan S."/>
            <person name="Khaykin E."/>
            <person name="Kim C.J."/>
            <person name="Koo H.L."/>
            <person name="Kremenetskaia I."/>
            <person name="Kurtz D.B."/>
            <person name="Kwan A."/>
            <person name="Lam B."/>
            <person name="Langin-Hooper S."/>
            <person name="Lee A."/>
            <person name="Lee J.M."/>
            <person name="Lenz C.A."/>
            <person name="Li J.H."/>
            <person name="Li Y.-P."/>
            <person name="Lin X."/>
            <person name="Liu S.X."/>
            <person name="Liu Z.A."/>
            <person name="Luros J.S."/>
            <person name="Maiti R."/>
            <person name="Marziali A."/>
            <person name="Militscher J."/>
            <person name="Miranda M."/>
            <person name="Nguyen M."/>
            <person name="Nierman W.C."/>
            <person name="Osborne B.I."/>
            <person name="Pai G."/>
            <person name="Peterson J."/>
            <person name="Pham P.K."/>
            <person name="Rizzo M."/>
            <person name="Rooney T."/>
            <person name="Rowley D."/>
            <person name="Sakano H."/>
            <person name="Salzberg S.L."/>
            <person name="Schwartz J.R."/>
            <person name="Shinn P."/>
            <person name="Southwick A.M."/>
            <person name="Sun H."/>
            <person name="Tallon L.J."/>
            <person name="Tambunga G."/>
            <person name="Toriumi M.J."/>
            <person name="Town C.D."/>
            <person name="Utterback T."/>
            <person name="Van Aken S."/>
            <person name="Vaysberg M."/>
            <person name="Vysotskaia V.S."/>
            <person name="Walker M."/>
            <person name="Wu D."/>
            <person name="Yu G."/>
            <person name="Fraser C.M."/>
            <person name="Venter J.C."/>
            <person name="Davis R.W."/>
        </authorList>
    </citation>
    <scope>NUCLEOTIDE SEQUENCE [LARGE SCALE GENOMIC DNA]</scope>
    <source>
        <strain>cv. Columbia</strain>
    </source>
</reference>
<reference key="4">
    <citation type="journal article" date="2017" name="Plant J.">
        <title>Araport11: a complete reannotation of the Arabidopsis thaliana reference genome.</title>
        <authorList>
            <person name="Cheng C.Y."/>
            <person name="Krishnakumar V."/>
            <person name="Chan A.P."/>
            <person name="Thibaud-Nissen F."/>
            <person name="Schobel S."/>
            <person name="Town C.D."/>
        </authorList>
    </citation>
    <scope>GENOME REANNOTATION</scope>
    <source>
        <strain>cv. Columbia</strain>
    </source>
</reference>
<reference key="5">
    <citation type="journal article" date="2002" name="Science">
        <title>Functional annotation of a full-length Arabidopsis cDNA collection.</title>
        <authorList>
            <person name="Seki M."/>
            <person name="Narusaka M."/>
            <person name="Kamiya A."/>
            <person name="Ishida J."/>
            <person name="Satou M."/>
            <person name="Sakurai T."/>
            <person name="Nakajima M."/>
            <person name="Enju A."/>
            <person name="Akiyama K."/>
            <person name="Oono Y."/>
            <person name="Muramatsu M."/>
            <person name="Hayashizaki Y."/>
            <person name="Kawai J."/>
            <person name="Carninci P."/>
            <person name="Itoh M."/>
            <person name="Ishii Y."/>
            <person name="Arakawa T."/>
            <person name="Shibata K."/>
            <person name="Shinagawa A."/>
            <person name="Shinozaki K."/>
        </authorList>
    </citation>
    <scope>NUCLEOTIDE SEQUENCE [LARGE SCALE MRNA]</scope>
    <source>
        <strain>cv. Columbia</strain>
    </source>
</reference>
<reference key="6">
    <citation type="journal article" date="2003" name="Science">
        <title>Empirical analysis of transcriptional activity in the Arabidopsis genome.</title>
        <authorList>
            <person name="Yamada K."/>
            <person name="Lim J."/>
            <person name="Dale J.M."/>
            <person name="Chen H."/>
            <person name="Shinn P."/>
            <person name="Palm C.J."/>
            <person name="Southwick A.M."/>
            <person name="Wu H.C."/>
            <person name="Kim C.J."/>
            <person name="Nguyen M."/>
            <person name="Pham P.K."/>
            <person name="Cheuk R.F."/>
            <person name="Karlin-Newmann G."/>
            <person name="Liu S.X."/>
            <person name="Lam B."/>
            <person name="Sakano H."/>
            <person name="Wu T."/>
            <person name="Yu G."/>
            <person name="Miranda M."/>
            <person name="Quach H.L."/>
            <person name="Tripp M."/>
            <person name="Chang C.H."/>
            <person name="Lee J.M."/>
            <person name="Toriumi M.J."/>
            <person name="Chan M.M."/>
            <person name="Tang C.C."/>
            <person name="Onodera C.S."/>
            <person name="Deng J.M."/>
            <person name="Akiyama K."/>
            <person name="Ansari Y."/>
            <person name="Arakawa T."/>
            <person name="Banh J."/>
            <person name="Banno F."/>
            <person name="Bowser L."/>
            <person name="Brooks S.Y."/>
            <person name="Carninci P."/>
            <person name="Chao Q."/>
            <person name="Choy N."/>
            <person name="Enju A."/>
            <person name="Goldsmith A.D."/>
            <person name="Gurjal M."/>
            <person name="Hansen N.F."/>
            <person name="Hayashizaki Y."/>
            <person name="Johnson-Hopson C."/>
            <person name="Hsuan V.W."/>
            <person name="Iida K."/>
            <person name="Karnes M."/>
            <person name="Khan S."/>
            <person name="Koesema E."/>
            <person name="Ishida J."/>
            <person name="Jiang P.X."/>
            <person name="Jones T."/>
            <person name="Kawai J."/>
            <person name="Kamiya A."/>
            <person name="Meyers C."/>
            <person name="Nakajima M."/>
            <person name="Narusaka M."/>
            <person name="Seki M."/>
            <person name="Sakurai T."/>
            <person name="Satou M."/>
            <person name="Tamse R."/>
            <person name="Vaysberg M."/>
            <person name="Wallender E.K."/>
            <person name="Wong C."/>
            <person name="Yamamura Y."/>
            <person name="Yuan S."/>
            <person name="Shinozaki K."/>
            <person name="Davis R.W."/>
            <person name="Theologis A."/>
            <person name="Ecker J.R."/>
        </authorList>
    </citation>
    <scope>NUCLEOTIDE SEQUENCE [LARGE SCALE MRNA]</scope>
    <source>
        <strain>cv. Columbia</strain>
    </source>
</reference>
<reference key="7">
    <citation type="journal article" date="2004" name="Biochem. Biophys. Res. Commun.">
        <title>Cyclin D1 and p22ack1 play opposite roles in plant growth and development.</title>
        <authorList>
            <person name="Cho J.W."/>
            <person name="Park S.C."/>
            <person name="Shin E.A."/>
            <person name="Kim C.K."/>
            <person name="Han W."/>
            <person name="Sohn S.-I."/>
            <person name="Song P.S."/>
            <person name="Wang M.-H."/>
        </authorList>
    </citation>
    <scope>NUCLEOTIDE SEQUENCE [GENOMIC DNA] OF 1-120</scope>
    <scope>INTERACTION WITH KRP6/ICK4</scope>
</reference>
<reference key="8">
    <citation type="journal article" date="1999" name="FEBS Lett.">
        <title>Mutational analysis of two Arabidopsis thaliana cyclin-dependent kinases in fission yeast.</title>
        <authorList>
            <person name="Porceddu A."/>
            <person name="de Veylder L."/>
            <person name="Hayles J."/>
            <person name="van Montagu M."/>
            <person name="Inze D."/>
            <person name="Mironov V."/>
        </authorList>
    </citation>
    <scope>INTERACTION WITH CDKA-1</scope>
</reference>
<reference key="9">
    <citation type="journal article" date="2004" name="Plant Physiol.">
        <title>Genome-wide analysis of the cyclin family in Arabidopsis and comparative phylogenetic analysis of plant cyclin-like proteins.</title>
        <authorList>
            <person name="Wang G."/>
            <person name="Kong H."/>
            <person name="Sun Y."/>
            <person name="Zhang X."/>
            <person name="Zhang W."/>
            <person name="Altman N."/>
            <person name="dePamphilis C.W."/>
            <person name="Ma H."/>
        </authorList>
    </citation>
    <scope>GENE FAMILY</scope>
    <scope>NOMENCLATURE</scope>
</reference>
<reference key="10">
    <citation type="journal article" date="2005" name="Proc. Natl. Acad. Sci. U.S.A.">
        <title>D-type cyclins activate division in the root apex to promote seed germination in Arabidopsis.</title>
        <authorList>
            <person name="Masubelele N.H."/>
            <person name="Dewitte W."/>
            <person name="Menges M."/>
            <person name="Maughan S."/>
            <person name="Collins C."/>
            <person name="Huntley R."/>
            <person name="Nieuwland J."/>
            <person name="Scofield S."/>
            <person name="Murray J.A.H."/>
        </authorList>
    </citation>
    <scope>FUNCTION</scope>
    <scope>DEVELOPMENTAL STAGE</scope>
</reference>
<sequence>MRSYRFSDYLHMSVSFSNDMDLFCGEDSGVFSGESTVDFSSSEVDSWPGDSIACFIEDERHFVPGHDYLSRFQTRSLDASAREDSVAWILKVQAYYNFQPLTAYLAVNYMDRFLYARRLPETSGWPMQLLAVACLSLAAKMEEILVPSLFDFQVAGVKYLFEAKTIKRMELLVLSVLDWRLRSVTPFDFISFFAYKIDPSGTFLGFFISHATEIILSNIKEASFLEYWPSSIAAAAILCVANELPSLSSVVNPHESPETWCDGLSKEKIVRCYRLMKAMAIENNRLNTPKVIAKLRVSVRASSTLTRPSDESSFSSSSPCKRRKLSGYSWVGDETSTSN</sequence>
<organism>
    <name type="scientific">Arabidopsis thaliana</name>
    <name type="common">Mouse-ear cress</name>
    <dbReference type="NCBI Taxonomy" id="3702"/>
    <lineage>
        <taxon>Eukaryota</taxon>
        <taxon>Viridiplantae</taxon>
        <taxon>Streptophyta</taxon>
        <taxon>Embryophyta</taxon>
        <taxon>Tracheophyta</taxon>
        <taxon>Spermatophyta</taxon>
        <taxon>Magnoliopsida</taxon>
        <taxon>eudicotyledons</taxon>
        <taxon>Gunneridae</taxon>
        <taxon>Pentapetalae</taxon>
        <taxon>rosids</taxon>
        <taxon>malvids</taxon>
        <taxon>Brassicales</taxon>
        <taxon>Brassicaceae</taxon>
        <taxon>Camelineae</taxon>
        <taxon>Arabidopsis</taxon>
    </lineage>
</organism>
<dbReference type="EMBL" id="X83369">
    <property type="protein sequence ID" value="CAA58285.1"/>
    <property type="molecule type" value="mRNA"/>
</dbReference>
<dbReference type="EMBL" id="AC002062">
    <property type="protein sequence ID" value="AAB61096.1"/>
    <property type="molecule type" value="Genomic_DNA"/>
</dbReference>
<dbReference type="EMBL" id="CP002684">
    <property type="protein sequence ID" value="AEE35034.1"/>
    <property type="molecule type" value="Genomic_DNA"/>
</dbReference>
<dbReference type="EMBL" id="AK117189">
    <property type="protein sequence ID" value="BAC41865.1"/>
    <property type="molecule type" value="mRNA"/>
</dbReference>
<dbReference type="EMBL" id="BT005315">
    <property type="protein sequence ID" value="AAO63379.1"/>
    <property type="molecule type" value="mRNA"/>
</dbReference>
<dbReference type="EMBL" id="AF208693">
    <property type="protein sequence ID" value="AAL35986.1"/>
    <property type="molecule type" value="Genomic_DNA"/>
</dbReference>
<dbReference type="PIR" id="A96725">
    <property type="entry name" value="A96725"/>
</dbReference>
<dbReference type="PIR" id="S51650">
    <property type="entry name" value="S51650"/>
</dbReference>
<dbReference type="RefSeq" id="NP_177178.1">
    <property type="nucleotide sequence ID" value="NM_105689.4"/>
</dbReference>
<dbReference type="SMR" id="P42751"/>
<dbReference type="BioGRID" id="28578">
    <property type="interactions" value="13"/>
</dbReference>
<dbReference type="FunCoup" id="P42751">
    <property type="interactions" value="643"/>
</dbReference>
<dbReference type="IntAct" id="P42751">
    <property type="interactions" value="4"/>
</dbReference>
<dbReference type="STRING" id="3702.P42751"/>
<dbReference type="PaxDb" id="3702-AT1G70210.1"/>
<dbReference type="DNASU" id="843357"/>
<dbReference type="EnsemblPlants" id="AT1G70210.1">
    <property type="protein sequence ID" value="AT1G70210.1"/>
    <property type="gene ID" value="AT1G70210"/>
</dbReference>
<dbReference type="GeneID" id="843357"/>
<dbReference type="Gramene" id="AT1G70210.1">
    <property type="protein sequence ID" value="AT1G70210.1"/>
    <property type="gene ID" value="AT1G70210"/>
</dbReference>
<dbReference type="KEGG" id="ath:AT1G70210"/>
<dbReference type="Araport" id="AT1G70210"/>
<dbReference type="TAIR" id="AT1G70210">
    <property type="gene designation" value="CYCD1"/>
</dbReference>
<dbReference type="eggNOG" id="KOG0656">
    <property type="taxonomic scope" value="Eukaryota"/>
</dbReference>
<dbReference type="HOGENOM" id="CLU_048040_2_0_1"/>
<dbReference type="InParanoid" id="P42751"/>
<dbReference type="OMA" id="CFIEDER"/>
<dbReference type="PhylomeDB" id="P42751"/>
<dbReference type="PRO" id="PR:P42751"/>
<dbReference type="Proteomes" id="UP000006548">
    <property type="component" value="Chromosome 1"/>
</dbReference>
<dbReference type="ExpressionAtlas" id="P42751">
    <property type="expression patterns" value="baseline and differential"/>
</dbReference>
<dbReference type="GO" id="GO:0051301">
    <property type="term" value="P:cell division"/>
    <property type="evidence" value="ECO:0007669"/>
    <property type="project" value="UniProtKB-KW"/>
</dbReference>
<dbReference type="CDD" id="cd20543">
    <property type="entry name" value="CYCLIN_AtCycD-like_rpt1"/>
    <property type="match status" value="1"/>
</dbReference>
<dbReference type="CDD" id="cd20544">
    <property type="entry name" value="CYCLIN_AtCycD-like_rpt2"/>
    <property type="match status" value="1"/>
</dbReference>
<dbReference type="FunFam" id="1.10.472.10:FF:000034">
    <property type="entry name" value="D2/4-type cyclin"/>
    <property type="match status" value="1"/>
</dbReference>
<dbReference type="Gene3D" id="1.10.472.10">
    <property type="entry name" value="Cyclin-like"/>
    <property type="match status" value="2"/>
</dbReference>
<dbReference type="InterPro" id="IPR039361">
    <property type="entry name" value="Cyclin"/>
</dbReference>
<dbReference type="InterPro" id="IPR013763">
    <property type="entry name" value="Cyclin-like_dom"/>
</dbReference>
<dbReference type="InterPro" id="IPR036915">
    <property type="entry name" value="Cyclin-like_sf"/>
</dbReference>
<dbReference type="InterPro" id="IPR004367">
    <property type="entry name" value="Cyclin_C-dom"/>
</dbReference>
<dbReference type="InterPro" id="IPR006671">
    <property type="entry name" value="Cyclin_N"/>
</dbReference>
<dbReference type="InterPro" id="IPR048258">
    <property type="entry name" value="Cyclins_cyclin-box"/>
</dbReference>
<dbReference type="InterPro" id="IPR036280">
    <property type="entry name" value="Multihaem_cyt_sf"/>
</dbReference>
<dbReference type="PANTHER" id="PTHR10177">
    <property type="entry name" value="CYCLINS"/>
    <property type="match status" value="1"/>
</dbReference>
<dbReference type="Pfam" id="PF02984">
    <property type="entry name" value="Cyclin_C"/>
    <property type="match status" value="1"/>
</dbReference>
<dbReference type="Pfam" id="PF00134">
    <property type="entry name" value="Cyclin_N"/>
    <property type="match status" value="1"/>
</dbReference>
<dbReference type="SMART" id="SM00385">
    <property type="entry name" value="CYCLIN"/>
    <property type="match status" value="1"/>
</dbReference>
<dbReference type="SMART" id="SM01332">
    <property type="entry name" value="Cyclin_C"/>
    <property type="match status" value="1"/>
</dbReference>
<dbReference type="SUPFAM" id="SSF47954">
    <property type="entry name" value="Cyclin-like"/>
    <property type="match status" value="1"/>
</dbReference>
<dbReference type="SUPFAM" id="SSF48695">
    <property type="entry name" value="Multiheme cytochromes"/>
    <property type="match status" value="1"/>
</dbReference>
<dbReference type="PROSITE" id="PS00292">
    <property type="entry name" value="CYCLINS"/>
    <property type="match status" value="1"/>
</dbReference>
<comment type="function">
    <text evidence="3">May activate cell cycle in the root apical meristem (RAM) and promote embryonic root (radicle) protrusion.</text>
</comment>
<comment type="subunit">
    <text evidence="1 2">Interacts with CDKA-1 and KRP6/ICK4.</text>
</comment>
<comment type="interaction">
    <interactant intactId="EBI-2025690">
        <id>P42751</id>
    </interactant>
    <interactant intactId="EBI-1253579">
        <id>Q8LF80</id>
        <label>CDKB2-1</label>
    </interactant>
    <organismsDiffer>false</organismsDiffer>
    <experiments>2</experiments>
</comment>
<comment type="tissue specificity">
    <text evidence="4">Expressed in roots, leaves and flowers.</text>
</comment>
<comment type="developmental stage">
    <text evidence="3">Transiently expressed in the root tip during seed germination up to about 21 hours after stratification.</text>
</comment>
<comment type="similarity">
    <text evidence="5">Belongs to the cyclin family. Cyclin D subfamily.</text>
</comment>
<evidence type="ECO:0000269" key="1">
    <source>
    </source>
</evidence>
<evidence type="ECO:0000269" key="2">
    <source>
    </source>
</evidence>
<evidence type="ECO:0000269" key="3">
    <source>
    </source>
</evidence>
<evidence type="ECO:0000269" key="4">
    <source>
    </source>
</evidence>
<evidence type="ECO:0000305" key="5"/>
<feature type="chain" id="PRO_0000080445" description="Cyclin-D1-1">
    <location>
        <begin position="1"/>
        <end position="339"/>
    </location>
</feature>
<feature type="sequence conflict" description="In Ref. 1; CAA58285." evidence="5" ref="1">
    <location>
        <begin position="314"/>
        <end position="317"/>
    </location>
</feature>
<proteinExistence type="evidence at protein level"/>
<protein>
    <recommendedName>
        <fullName>Cyclin-D1-1</fullName>
    </recommendedName>
    <alternativeName>
        <fullName>Cyclin-delta-1</fullName>
        <shortName>Cyclin-d1</shortName>
    </alternativeName>
    <alternativeName>
        <fullName>G1/S-specific cyclin-D1-1</fullName>
        <shortName>CycD1;1</shortName>
    </alternativeName>
</protein>
<name>CCD11_ARATH</name>
<gene>
    <name type="primary">CYCD1-1</name>
    <name type="synonym">CYCD1</name>
    <name type="ordered locus">At1g70210</name>
    <name type="ORF">F20P5.7</name>
</gene>
<accession>P42751</accession>
<accession>O04525</accession>
<accession>Q8W2K2</accession>